<proteinExistence type="inferred from homology"/>
<sequence>MPSNSASERSTTIPDRTPGELVVVTGMTGAGRSTAAKELEDLGYYVVDNLPPSLLRDVVRLVDETRGTAQPIAVVVDVRSGSFFQTLQANLAQGATGRHATLVFLEADDDVLVRRQEAARRPHPLQGGGRLIDGLVRERGVLADLRGDADLVIDTTGLNVHQLTDRIADAFGTPDTVRLKVTVISFGFKYGIPVDADFVADMRFLPNPHWIPELRPRTGRDAAVADYVMAQPAAAEFLDAYVPVLEGVASGYLREGKRFMTIAIGCTGGKHRSVAMTEEISRRLGEAGYETRSTHRDLGRE</sequence>
<reference key="1">
    <citation type="submission" date="2006-12" db="EMBL/GenBank/DDBJ databases">
        <title>Complete sequence of chromosome 1 of Nocardioides sp. JS614.</title>
        <authorList>
            <person name="Copeland A."/>
            <person name="Lucas S."/>
            <person name="Lapidus A."/>
            <person name="Barry K."/>
            <person name="Detter J.C."/>
            <person name="Glavina del Rio T."/>
            <person name="Hammon N."/>
            <person name="Israni S."/>
            <person name="Dalin E."/>
            <person name="Tice H."/>
            <person name="Pitluck S."/>
            <person name="Thompson L.S."/>
            <person name="Brettin T."/>
            <person name="Bruce D."/>
            <person name="Han C."/>
            <person name="Tapia R."/>
            <person name="Schmutz J."/>
            <person name="Larimer F."/>
            <person name="Land M."/>
            <person name="Hauser L."/>
            <person name="Kyrpides N."/>
            <person name="Kim E."/>
            <person name="Mattes T."/>
            <person name="Gossett J."/>
            <person name="Richardson P."/>
        </authorList>
    </citation>
    <scope>NUCLEOTIDE SEQUENCE [LARGE SCALE GENOMIC DNA]</scope>
    <source>
        <strain>ATCC BAA-499 / JS614</strain>
    </source>
</reference>
<gene>
    <name type="ordered locus">Noca_2527</name>
</gene>
<accession>A1SJP6</accession>
<protein>
    <recommendedName>
        <fullName evidence="1">Nucleotide-binding protein Noca_2527</fullName>
    </recommendedName>
</protein>
<dbReference type="EMBL" id="CP000509">
    <property type="protein sequence ID" value="ABL82031.1"/>
    <property type="molecule type" value="Genomic_DNA"/>
</dbReference>
<dbReference type="SMR" id="A1SJP6"/>
<dbReference type="STRING" id="196162.Noca_2527"/>
<dbReference type="KEGG" id="nca:Noca_2527"/>
<dbReference type="eggNOG" id="COG1660">
    <property type="taxonomic scope" value="Bacteria"/>
</dbReference>
<dbReference type="HOGENOM" id="CLU_059558_0_0_11"/>
<dbReference type="OrthoDB" id="9784461at2"/>
<dbReference type="Proteomes" id="UP000000640">
    <property type="component" value="Chromosome"/>
</dbReference>
<dbReference type="GO" id="GO:0005524">
    <property type="term" value="F:ATP binding"/>
    <property type="evidence" value="ECO:0007669"/>
    <property type="project" value="UniProtKB-UniRule"/>
</dbReference>
<dbReference type="GO" id="GO:0005525">
    <property type="term" value="F:GTP binding"/>
    <property type="evidence" value="ECO:0007669"/>
    <property type="project" value="UniProtKB-UniRule"/>
</dbReference>
<dbReference type="Gene3D" id="3.40.50.300">
    <property type="entry name" value="P-loop containing nucleotide triphosphate hydrolases"/>
    <property type="match status" value="1"/>
</dbReference>
<dbReference type="HAMAP" id="MF_00636">
    <property type="entry name" value="RapZ_like"/>
    <property type="match status" value="1"/>
</dbReference>
<dbReference type="InterPro" id="IPR027417">
    <property type="entry name" value="P-loop_NTPase"/>
</dbReference>
<dbReference type="InterPro" id="IPR005337">
    <property type="entry name" value="RapZ-like"/>
</dbReference>
<dbReference type="InterPro" id="IPR053930">
    <property type="entry name" value="RapZ-like_N"/>
</dbReference>
<dbReference type="InterPro" id="IPR053931">
    <property type="entry name" value="RapZ_C"/>
</dbReference>
<dbReference type="NCBIfam" id="NF003828">
    <property type="entry name" value="PRK05416.1"/>
    <property type="match status" value="1"/>
</dbReference>
<dbReference type="PANTHER" id="PTHR30448">
    <property type="entry name" value="RNASE ADAPTER PROTEIN RAPZ"/>
    <property type="match status" value="1"/>
</dbReference>
<dbReference type="PANTHER" id="PTHR30448:SF0">
    <property type="entry name" value="RNASE ADAPTER PROTEIN RAPZ"/>
    <property type="match status" value="1"/>
</dbReference>
<dbReference type="Pfam" id="PF22740">
    <property type="entry name" value="PapZ_C"/>
    <property type="match status" value="1"/>
</dbReference>
<dbReference type="Pfam" id="PF03668">
    <property type="entry name" value="RapZ-like_N"/>
    <property type="match status" value="1"/>
</dbReference>
<dbReference type="PIRSF" id="PIRSF005052">
    <property type="entry name" value="P-loopkin"/>
    <property type="match status" value="1"/>
</dbReference>
<dbReference type="SUPFAM" id="SSF52540">
    <property type="entry name" value="P-loop containing nucleoside triphosphate hydrolases"/>
    <property type="match status" value="1"/>
</dbReference>
<keyword id="KW-0067">ATP-binding</keyword>
<keyword id="KW-0342">GTP-binding</keyword>
<keyword id="KW-0547">Nucleotide-binding</keyword>
<keyword id="KW-1185">Reference proteome</keyword>
<organism>
    <name type="scientific">Nocardioides sp. (strain ATCC BAA-499 / JS614)</name>
    <dbReference type="NCBI Taxonomy" id="196162"/>
    <lineage>
        <taxon>Bacteria</taxon>
        <taxon>Bacillati</taxon>
        <taxon>Actinomycetota</taxon>
        <taxon>Actinomycetes</taxon>
        <taxon>Propionibacteriales</taxon>
        <taxon>Nocardioidaceae</taxon>
        <taxon>Nocardioides</taxon>
    </lineage>
</organism>
<comment type="function">
    <text evidence="1">Displays ATPase and GTPase activities.</text>
</comment>
<comment type="similarity">
    <text evidence="1">Belongs to the RapZ-like family.</text>
</comment>
<evidence type="ECO:0000255" key="1">
    <source>
        <dbReference type="HAMAP-Rule" id="MF_00636"/>
    </source>
</evidence>
<name>Y2527_NOCSJ</name>
<feature type="chain" id="PRO_0000383274" description="Nucleotide-binding protein Noca_2527">
    <location>
        <begin position="1"/>
        <end position="301"/>
    </location>
</feature>
<feature type="binding site" evidence="1">
    <location>
        <begin position="26"/>
        <end position="33"/>
    </location>
    <ligand>
        <name>ATP</name>
        <dbReference type="ChEBI" id="CHEBI:30616"/>
    </ligand>
</feature>
<feature type="binding site" evidence="1">
    <location>
        <begin position="77"/>
        <end position="80"/>
    </location>
    <ligand>
        <name>GTP</name>
        <dbReference type="ChEBI" id="CHEBI:37565"/>
    </ligand>
</feature>